<protein>
    <recommendedName>
        <fullName evidence="1">Photosystem I P700 chlorophyll a apoprotein A1</fullName>
        <ecNumber evidence="1">1.97.1.12</ecNumber>
    </recommendedName>
    <alternativeName>
        <fullName evidence="1">PSI-A</fullName>
    </alternativeName>
    <alternativeName>
        <fullName evidence="1">PsaA</fullName>
    </alternativeName>
</protein>
<keyword id="KW-0004">4Fe-4S</keyword>
<keyword id="KW-0148">Chlorophyll</keyword>
<keyword id="KW-0150">Chloroplast</keyword>
<keyword id="KW-0157">Chromophore</keyword>
<keyword id="KW-0249">Electron transport</keyword>
<keyword id="KW-0408">Iron</keyword>
<keyword id="KW-0411">Iron-sulfur</keyword>
<keyword id="KW-0460">Magnesium</keyword>
<keyword id="KW-0472">Membrane</keyword>
<keyword id="KW-0479">Metal-binding</keyword>
<keyword id="KW-0560">Oxidoreductase</keyword>
<keyword id="KW-0602">Photosynthesis</keyword>
<keyword id="KW-0603">Photosystem I</keyword>
<keyword id="KW-0934">Plastid</keyword>
<keyword id="KW-0793">Thylakoid</keyword>
<keyword id="KW-0812">Transmembrane</keyword>
<keyword id="KW-1133">Transmembrane helix</keyword>
<keyword id="KW-0813">Transport</keyword>
<sequence>MIIRSPEPEVKILVDRDHIKTSFEEWARPGHFSRTLAKGPDTTTWIWNLHADAHDFDSHTSDLEEISRKVFSAHFGQLSIIFLWLSGMYFHGARFSNYEAWLSDPTHIGPSAQVVWPVVGQEILNGDVGGGFRGIQITSGFFQIWRASGITSELQLYCTAIGALIFAALMLFAGWFHYHKAAPKLAWFQDVESMLNHHLAGLLGLGSLSWAGHQVHVSLPINQFLNAGVDPKEIPLPHEFILNRDLLAQLYPSFAEGATPFFTLNWSKYADFLTFRGGLDPVTGGLWLTDIAHHHLAIAILFLIAGHMYKTNWGIGHGLKDILEAHKGPFTGQGHKGLYEILTTSWHAQLSLNLAMLGSLTIVVAHHMYSMPPYPYLATDYGTQLSLFTHHMWIGGFLIVGAAAHAAIFMVRDYDPTTRYNDLLDRVLRHRDAIISHLNWACIFLGFHSFGLYIHNDTMSALGRPQDMFSDTAIQLQPVFAQWIQNTHALAPGATAPGATTSTSLTWGGGDLVAVGGKVALLPIPLGTADFLVHHIHAFTIHVTVLILLKGVLFARSSRLIPDKANLGFRFPCDGPGRGGTCQVSAWDHVFLGLFWMYNAISVVIFHFSWKMQSDVWGSISDQGVVTHITGGNFAQSSITINGWLRDFLWAQASQVIQSYGSSLSAYGLFFLGAHFVWAFSLMFLFSGRGYWQELIESIVWAHNKLKVAPATQPRALSIVQGRAVGVTHYLLGGIATTWAFFLARIIAVG</sequence>
<accession>Q68S06</accession>
<gene>
    <name evidence="1" type="primary">psaA</name>
    <name type="ORF">PSC0415</name>
</gene>
<geneLocation type="chloroplast"/>
<reference key="1">
    <citation type="journal article" date="2004" name="DNA Res.">
        <title>Complete chloroplast genome sequence from Korea ginseng (Panax schinseng Nees) and comparative analysis of sequence evolution among 17 vascular plants.</title>
        <authorList>
            <person name="Kim K.-J."/>
            <person name="Lee H.-L."/>
        </authorList>
    </citation>
    <scope>NUCLEOTIDE SEQUENCE [LARGE SCALE GENOMIC DNA]</scope>
</reference>
<feature type="chain" id="PRO_0000088567" description="Photosystem I P700 chlorophyll a apoprotein A1">
    <location>
        <begin position="1"/>
        <end position="750"/>
    </location>
</feature>
<feature type="transmembrane region" description="Helical; Name=I" evidence="1">
    <location>
        <begin position="70"/>
        <end position="93"/>
    </location>
</feature>
<feature type="transmembrane region" description="Helical; Name=II" evidence="1">
    <location>
        <begin position="156"/>
        <end position="179"/>
    </location>
</feature>
<feature type="transmembrane region" description="Helical; Name=III" evidence="1">
    <location>
        <begin position="195"/>
        <end position="219"/>
    </location>
</feature>
<feature type="transmembrane region" description="Helical; Name=IV" evidence="1">
    <location>
        <begin position="291"/>
        <end position="309"/>
    </location>
</feature>
<feature type="transmembrane region" description="Helical; Name=V" evidence="1">
    <location>
        <begin position="346"/>
        <end position="369"/>
    </location>
</feature>
<feature type="transmembrane region" description="Helical; Name=VI" evidence="1">
    <location>
        <begin position="385"/>
        <end position="411"/>
    </location>
</feature>
<feature type="transmembrane region" description="Helical; Name=VII" evidence="1">
    <location>
        <begin position="433"/>
        <end position="455"/>
    </location>
</feature>
<feature type="transmembrane region" description="Helical; Name=VIII" evidence="1">
    <location>
        <begin position="531"/>
        <end position="549"/>
    </location>
</feature>
<feature type="transmembrane region" description="Helical; Name=IX" evidence="1">
    <location>
        <begin position="589"/>
        <end position="610"/>
    </location>
</feature>
<feature type="transmembrane region" description="Helical; Name=X" evidence="1">
    <location>
        <begin position="664"/>
        <end position="686"/>
    </location>
</feature>
<feature type="transmembrane region" description="Helical; Name=XI" evidence="1">
    <location>
        <begin position="724"/>
        <end position="744"/>
    </location>
</feature>
<feature type="binding site" evidence="1">
    <location>
        <position position="573"/>
    </location>
    <ligand>
        <name>[4Fe-4S] cluster</name>
        <dbReference type="ChEBI" id="CHEBI:49883"/>
        <note>ligand shared between dimeric partners</note>
    </ligand>
</feature>
<feature type="binding site" evidence="1">
    <location>
        <position position="582"/>
    </location>
    <ligand>
        <name>[4Fe-4S] cluster</name>
        <dbReference type="ChEBI" id="CHEBI:49883"/>
        <note>ligand shared between dimeric partners</note>
    </ligand>
</feature>
<feature type="binding site" description="axial binding residue" evidence="1">
    <location>
        <position position="675"/>
    </location>
    <ligand>
        <name>chlorophyll a'</name>
        <dbReference type="ChEBI" id="CHEBI:189419"/>
        <label>A1</label>
    </ligand>
    <ligandPart>
        <name>Mg</name>
        <dbReference type="ChEBI" id="CHEBI:25107"/>
    </ligandPart>
</feature>
<feature type="binding site" description="axial binding residue" evidence="1">
    <location>
        <position position="683"/>
    </location>
    <ligand>
        <name>chlorophyll a</name>
        <dbReference type="ChEBI" id="CHEBI:58416"/>
        <label>A3</label>
    </ligand>
    <ligandPart>
        <name>Mg</name>
        <dbReference type="ChEBI" id="CHEBI:25107"/>
    </ligandPart>
</feature>
<feature type="binding site" evidence="1">
    <location>
        <position position="691"/>
    </location>
    <ligand>
        <name>chlorophyll a</name>
        <dbReference type="ChEBI" id="CHEBI:58416"/>
        <label>A3</label>
    </ligand>
</feature>
<feature type="binding site" evidence="1">
    <location>
        <position position="692"/>
    </location>
    <ligand>
        <name>phylloquinone</name>
        <dbReference type="ChEBI" id="CHEBI:18067"/>
        <label>A</label>
    </ligand>
</feature>
<dbReference type="EC" id="1.97.1.12" evidence="1"/>
<dbReference type="EMBL" id="AY582139">
    <property type="protein sequence ID" value="AAT98509.1"/>
    <property type="molecule type" value="Genomic_DNA"/>
</dbReference>
<dbReference type="RefSeq" id="YP_086966.1">
    <property type="nucleotide sequence ID" value="NC_006290.1"/>
</dbReference>
<dbReference type="SMR" id="Q68S06"/>
<dbReference type="GeneID" id="3021465"/>
<dbReference type="GO" id="GO:0009535">
    <property type="term" value="C:chloroplast thylakoid membrane"/>
    <property type="evidence" value="ECO:0007669"/>
    <property type="project" value="UniProtKB-SubCell"/>
</dbReference>
<dbReference type="GO" id="GO:0009522">
    <property type="term" value="C:photosystem I"/>
    <property type="evidence" value="ECO:0007669"/>
    <property type="project" value="UniProtKB-KW"/>
</dbReference>
<dbReference type="GO" id="GO:0051539">
    <property type="term" value="F:4 iron, 4 sulfur cluster binding"/>
    <property type="evidence" value="ECO:0007669"/>
    <property type="project" value="UniProtKB-KW"/>
</dbReference>
<dbReference type="GO" id="GO:0016168">
    <property type="term" value="F:chlorophyll binding"/>
    <property type="evidence" value="ECO:0007669"/>
    <property type="project" value="UniProtKB-KW"/>
</dbReference>
<dbReference type="GO" id="GO:0009055">
    <property type="term" value="F:electron transfer activity"/>
    <property type="evidence" value="ECO:0007669"/>
    <property type="project" value="UniProtKB-UniRule"/>
</dbReference>
<dbReference type="GO" id="GO:0000287">
    <property type="term" value="F:magnesium ion binding"/>
    <property type="evidence" value="ECO:0007669"/>
    <property type="project" value="UniProtKB-UniRule"/>
</dbReference>
<dbReference type="GO" id="GO:0016491">
    <property type="term" value="F:oxidoreductase activity"/>
    <property type="evidence" value="ECO:0007669"/>
    <property type="project" value="UniProtKB-KW"/>
</dbReference>
<dbReference type="GO" id="GO:0015979">
    <property type="term" value="P:photosynthesis"/>
    <property type="evidence" value="ECO:0007669"/>
    <property type="project" value="UniProtKB-UniRule"/>
</dbReference>
<dbReference type="FunFam" id="1.20.1130.10:FF:000001">
    <property type="entry name" value="Photosystem I P700 chlorophyll a apoprotein A2"/>
    <property type="match status" value="1"/>
</dbReference>
<dbReference type="Gene3D" id="1.20.1130.10">
    <property type="entry name" value="Photosystem I PsaA/PsaB"/>
    <property type="match status" value="1"/>
</dbReference>
<dbReference type="HAMAP" id="MF_00458">
    <property type="entry name" value="PSI_PsaA"/>
    <property type="match status" value="1"/>
</dbReference>
<dbReference type="InterPro" id="IPR006243">
    <property type="entry name" value="PSI_PsaA"/>
</dbReference>
<dbReference type="InterPro" id="IPR001280">
    <property type="entry name" value="PSI_PsaA/B"/>
</dbReference>
<dbReference type="InterPro" id="IPR020586">
    <property type="entry name" value="PSI_PsaA/B_CS"/>
</dbReference>
<dbReference type="InterPro" id="IPR036408">
    <property type="entry name" value="PSI_PsaA/B_sf"/>
</dbReference>
<dbReference type="NCBIfam" id="TIGR01335">
    <property type="entry name" value="psaA"/>
    <property type="match status" value="1"/>
</dbReference>
<dbReference type="PANTHER" id="PTHR30128">
    <property type="entry name" value="OUTER MEMBRANE PROTEIN, OMPA-RELATED"/>
    <property type="match status" value="1"/>
</dbReference>
<dbReference type="PANTHER" id="PTHR30128:SF19">
    <property type="entry name" value="PHOTOSYSTEM I P700 CHLOROPHYLL A APOPROTEIN A1-RELATED"/>
    <property type="match status" value="1"/>
</dbReference>
<dbReference type="Pfam" id="PF00223">
    <property type="entry name" value="PsaA_PsaB"/>
    <property type="match status" value="1"/>
</dbReference>
<dbReference type="PIRSF" id="PIRSF002905">
    <property type="entry name" value="PSI_A"/>
    <property type="match status" value="1"/>
</dbReference>
<dbReference type="PRINTS" id="PR00257">
    <property type="entry name" value="PHOTSYSPSAAB"/>
</dbReference>
<dbReference type="SUPFAM" id="SSF81558">
    <property type="entry name" value="Photosystem I subunits PsaA/PsaB"/>
    <property type="match status" value="1"/>
</dbReference>
<dbReference type="PROSITE" id="PS00419">
    <property type="entry name" value="PHOTOSYSTEM_I_PSAAB"/>
    <property type="match status" value="1"/>
</dbReference>
<evidence type="ECO:0000255" key="1">
    <source>
        <dbReference type="HAMAP-Rule" id="MF_00458"/>
    </source>
</evidence>
<comment type="function">
    <text>PsaA and PsaB bind P700, the primary electron donor of photosystem I (PSI), as well as the electron acceptors A0, A1 and FX. PSI is a plastocyanin-ferredoxin oxidoreductase, converting photonic excitation into a charge separation, which transfers an electron from the donor P700 chlorophyll pair to the spectroscopically characterized acceptors A0, A1, FX, FA and FB in turn. Oxidized P700 is reduced on the lumenal side of the thylakoid membrane by plastocyanin.</text>
</comment>
<comment type="catalytic activity">
    <reaction evidence="1">
        <text>reduced [plastocyanin] + hnu + oxidized [2Fe-2S]-[ferredoxin] = oxidized [plastocyanin] + reduced [2Fe-2S]-[ferredoxin]</text>
        <dbReference type="Rhea" id="RHEA:30407"/>
        <dbReference type="Rhea" id="RHEA-COMP:10000"/>
        <dbReference type="Rhea" id="RHEA-COMP:10001"/>
        <dbReference type="Rhea" id="RHEA-COMP:10039"/>
        <dbReference type="Rhea" id="RHEA-COMP:10040"/>
        <dbReference type="ChEBI" id="CHEBI:29036"/>
        <dbReference type="ChEBI" id="CHEBI:30212"/>
        <dbReference type="ChEBI" id="CHEBI:33737"/>
        <dbReference type="ChEBI" id="CHEBI:33738"/>
        <dbReference type="ChEBI" id="CHEBI:49552"/>
        <dbReference type="EC" id="1.97.1.12"/>
    </reaction>
</comment>
<comment type="cofactor">
    <text evidence="1">P700 is a chlorophyll a/chlorophyll a' dimer, A0 is one or more chlorophyll a, A1 is one or both phylloquinones and FX is a shared 4Fe-4S iron-sulfur center.</text>
</comment>
<comment type="subunit">
    <text evidence="1">The PsaA/B heterodimer binds the P700 chlorophyll special pair and subsequent electron acceptors. PSI consists of a core antenna complex that captures photons, and an electron transfer chain that converts photonic excitation into a charge separation. The eukaryotic PSI reaction center is composed of at least 11 subunits.</text>
</comment>
<comment type="subcellular location">
    <subcellularLocation>
        <location evidence="1">Plastid</location>
        <location evidence="1">Chloroplast thylakoid membrane</location>
        <topology evidence="1">Multi-pass membrane protein</topology>
    </subcellularLocation>
</comment>
<comment type="similarity">
    <text evidence="1">Belongs to the PsaA/PsaB family.</text>
</comment>
<organism>
    <name type="scientific">Panax ginseng</name>
    <name type="common">Korean ginseng</name>
    <dbReference type="NCBI Taxonomy" id="4054"/>
    <lineage>
        <taxon>Eukaryota</taxon>
        <taxon>Viridiplantae</taxon>
        <taxon>Streptophyta</taxon>
        <taxon>Embryophyta</taxon>
        <taxon>Tracheophyta</taxon>
        <taxon>Spermatophyta</taxon>
        <taxon>Magnoliopsida</taxon>
        <taxon>eudicotyledons</taxon>
        <taxon>Gunneridae</taxon>
        <taxon>Pentapetalae</taxon>
        <taxon>asterids</taxon>
        <taxon>campanulids</taxon>
        <taxon>Apiales</taxon>
        <taxon>Araliaceae</taxon>
        <taxon>Panax</taxon>
    </lineage>
</organism>
<proteinExistence type="inferred from homology"/>
<name>PSAA_PANGI</name>